<accession>Q47921</accession>
<evidence type="ECO:0000250" key="1"/>
<evidence type="ECO:0000255" key="2"/>
<evidence type="ECO:0000256" key="3">
    <source>
        <dbReference type="SAM" id="MobiDB-lite"/>
    </source>
</evidence>
<evidence type="ECO:0000305" key="4"/>
<dbReference type="EC" id="1.18.6.1"/>
<dbReference type="EMBL" id="U49515">
    <property type="protein sequence ID" value="AAC64641.1"/>
    <property type="molecule type" value="Genomic_DNA"/>
</dbReference>
<dbReference type="SMR" id="Q47921"/>
<dbReference type="GO" id="GO:0051539">
    <property type="term" value="F:4 iron, 4 sulfur cluster binding"/>
    <property type="evidence" value="ECO:0007669"/>
    <property type="project" value="UniProtKB-KW"/>
</dbReference>
<dbReference type="GO" id="GO:0005524">
    <property type="term" value="F:ATP binding"/>
    <property type="evidence" value="ECO:0007669"/>
    <property type="project" value="UniProtKB-UniRule"/>
</dbReference>
<dbReference type="GO" id="GO:0046872">
    <property type="term" value="F:metal ion binding"/>
    <property type="evidence" value="ECO:0007669"/>
    <property type="project" value="UniProtKB-KW"/>
</dbReference>
<dbReference type="GO" id="GO:0016163">
    <property type="term" value="F:nitrogenase activity"/>
    <property type="evidence" value="ECO:0007669"/>
    <property type="project" value="UniProtKB-UniRule"/>
</dbReference>
<dbReference type="GO" id="GO:0009399">
    <property type="term" value="P:nitrogen fixation"/>
    <property type="evidence" value="ECO:0007669"/>
    <property type="project" value="UniProtKB-UniRule"/>
</dbReference>
<dbReference type="CDD" id="cd02040">
    <property type="entry name" value="NifH"/>
    <property type="match status" value="1"/>
</dbReference>
<dbReference type="FunFam" id="3.40.50.300:FF:001379">
    <property type="entry name" value="Nitrogenase iron protein 1"/>
    <property type="match status" value="1"/>
</dbReference>
<dbReference type="Gene3D" id="3.40.50.300">
    <property type="entry name" value="P-loop containing nucleotide triphosphate hydrolases"/>
    <property type="match status" value="1"/>
</dbReference>
<dbReference type="HAMAP" id="MF_00533">
    <property type="entry name" value="NifH"/>
    <property type="match status" value="1"/>
</dbReference>
<dbReference type="InterPro" id="IPR030655">
    <property type="entry name" value="NifH/chlL_CS"/>
</dbReference>
<dbReference type="InterPro" id="IPR000392">
    <property type="entry name" value="NifH/frxC"/>
</dbReference>
<dbReference type="InterPro" id="IPR005977">
    <property type="entry name" value="Nitrogenase_Fe_NifH"/>
</dbReference>
<dbReference type="InterPro" id="IPR027417">
    <property type="entry name" value="P-loop_NTPase"/>
</dbReference>
<dbReference type="NCBIfam" id="TIGR01287">
    <property type="entry name" value="nifH"/>
    <property type="match status" value="1"/>
</dbReference>
<dbReference type="PANTHER" id="PTHR42864">
    <property type="entry name" value="LIGHT-INDEPENDENT PROTOCHLOROPHYLLIDE REDUCTASE IRON-SULFUR ATP-BINDING PROTEIN"/>
    <property type="match status" value="1"/>
</dbReference>
<dbReference type="PANTHER" id="PTHR42864:SF2">
    <property type="entry name" value="LIGHT-INDEPENDENT PROTOCHLOROPHYLLIDE REDUCTASE IRON-SULFUR ATP-BINDING PROTEIN"/>
    <property type="match status" value="1"/>
</dbReference>
<dbReference type="Pfam" id="PF00142">
    <property type="entry name" value="Fer4_NifH"/>
    <property type="match status" value="1"/>
</dbReference>
<dbReference type="PIRSF" id="PIRSF000363">
    <property type="entry name" value="Nitrogenase_iron"/>
    <property type="match status" value="1"/>
</dbReference>
<dbReference type="PRINTS" id="PR00091">
    <property type="entry name" value="NITROGNASEII"/>
</dbReference>
<dbReference type="SUPFAM" id="SSF52540">
    <property type="entry name" value="P-loop containing nucleoside triphosphate hydrolases"/>
    <property type="match status" value="1"/>
</dbReference>
<dbReference type="PROSITE" id="PS00746">
    <property type="entry name" value="NIFH_FRXC_1"/>
    <property type="match status" value="1"/>
</dbReference>
<dbReference type="PROSITE" id="PS00692">
    <property type="entry name" value="NIFH_FRXC_2"/>
    <property type="match status" value="1"/>
</dbReference>
<dbReference type="PROSITE" id="PS51026">
    <property type="entry name" value="NIFH_FRXC_3"/>
    <property type="match status" value="1"/>
</dbReference>
<name>NIFH2_MASLA</name>
<comment type="function">
    <text evidence="1">The key enzymatic reactions in nitrogen fixation are catalyzed by the nitrogenase complex, which has 2 components: the iron protein and the molybdenum-iron protein.</text>
</comment>
<comment type="catalytic activity">
    <reaction>
        <text>N2 + 8 reduced [2Fe-2S]-[ferredoxin] + 16 ATP + 16 H2O = H2 + 8 oxidized [2Fe-2S]-[ferredoxin] + 2 NH4(+) + 16 ADP + 16 phosphate + 6 H(+)</text>
        <dbReference type="Rhea" id="RHEA:21448"/>
        <dbReference type="Rhea" id="RHEA-COMP:10000"/>
        <dbReference type="Rhea" id="RHEA-COMP:10001"/>
        <dbReference type="ChEBI" id="CHEBI:15377"/>
        <dbReference type="ChEBI" id="CHEBI:15378"/>
        <dbReference type="ChEBI" id="CHEBI:17997"/>
        <dbReference type="ChEBI" id="CHEBI:18276"/>
        <dbReference type="ChEBI" id="CHEBI:28938"/>
        <dbReference type="ChEBI" id="CHEBI:30616"/>
        <dbReference type="ChEBI" id="CHEBI:33737"/>
        <dbReference type="ChEBI" id="CHEBI:33738"/>
        <dbReference type="ChEBI" id="CHEBI:43474"/>
        <dbReference type="ChEBI" id="CHEBI:456216"/>
        <dbReference type="EC" id="1.18.6.1"/>
    </reaction>
</comment>
<comment type="cofactor">
    <cofactor evidence="1">
        <name>[4Fe-4S] cluster</name>
        <dbReference type="ChEBI" id="CHEBI:49883"/>
    </cofactor>
    <text evidence="1">Binds 1 [4Fe-4S] cluster per dimer.</text>
</comment>
<comment type="subunit">
    <text evidence="1">Homodimer.</text>
</comment>
<comment type="PTM">
    <text evidence="1">The reversible ADP-ribosylation of Arg-104 inactivates the nitrogenase reductase and regulates nitrogenase activity.</text>
</comment>
<comment type="similarity">
    <text evidence="4">Belongs to the NifH/BchL/ChlL family.</text>
</comment>
<protein>
    <recommendedName>
        <fullName>Nitrogenase iron protein 2</fullName>
        <ecNumber>1.18.6.1</ecNumber>
    </recommendedName>
    <alternativeName>
        <fullName>Nitrogenase Fe protein 2</fullName>
    </alternativeName>
    <alternativeName>
        <fullName>Nitrogenase component II</fullName>
    </alternativeName>
    <alternativeName>
        <fullName>Nitrogenase reductase</fullName>
    </alternativeName>
</protein>
<sequence>MSDERIRQIAFYGKGGIGKSTTSQNTLAAMAEMGKRILIVGCDPKADSTRLILHCKAQTTVLHLAAEKGAVEDLELEEVVINGFRNIRCVESGGPEPGVGCAGRGIITAINFLEENGAYQDLDFVSYDVLGDVVCGGFAMPIREGKAQEIYIVTSGEMMAMFAANNISRGILKYAHSGGVRLGGLICNSRKTDREWDLISELARRISTQMIHFVPRDNIVQHAELRRMTVNEYAPDSNQANEYRTLATKIIDNEFMAVPTPLEMDELEELLIEFGILESDEQVKQLTETDKAAKESEKKQEDAEGEA</sequence>
<keyword id="KW-0004">4Fe-4S</keyword>
<keyword id="KW-0013">ADP-ribosylation</keyword>
<keyword id="KW-0067">ATP-binding</keyword>
<keyword id="KW-0408">Iron</keyword>
<keyword id="KW-0411">Iron-sulfur</keyword>
<keyword id="KW-0479">Metal-binding</keyword>
<keyword id="KW-0535">Nitrogen fixation</keyword>
<keyword id="KW-0547">Nucleotide-binding</keyword>
<keyword id="KW-0560">Oxidoreductase</keyword>
<proteinExistence type="inferred from homology"/>
<feature type="chain" id="PRO_0000139513" description="Nitrogenase iron protein 2">
    <location>
        <begin position="1"/>
        <end position="307"/>
    </location>
</feature>
<feature type="region of interest" description="Disordered" evidence="3">
    <location>
        <begin position="285"/>
        <end position="307"/>
    </location>
</feature>
<feature type="binding site" evidence="2">
    <location>
        <begin position="13"/>
        <end position="20"/>
    </location>
    <ligand>
        <name>ATP</name>
        <dbReference type="ChEBI" id="CHEBI:30616"/>
    </ligand>
</feature>
<feature type="binding site" evidence="1">
    <location>
        <position position="101"/>
    </location>
    <ligand>
        <name>[4Fe-4S] cluster</name>
        <dbReference type="ChEBI" id="CHEBI:49883"/>
        <note>ligand shared between dimeric partners</note>
    </ligand>
</feature>
<feature type="binding site" evidence="1">
    <location>
        <position position="135"/>
    </location>
    <ligand>
        <name>[4Fe-4S] cluster</name>
        <dbReference type="ChEBI" id="CHEBI:49883"/>
        <note>ligand shared between dimeric partners</note>
    </ligand>
</feature>
<feature type="modified residue" description="ADP-ribosylarginine; by dinitrogenase reductase ADP-ribosyltransferase" evidence="1">
    <location>
        <position position="104"/>
    </location>
</feature>
<organism>
    <name type="scientific">Mastigocladus laminosus</name>
    <name type="common">Fischerella sp.</name>
    <dbReference type="NCBI Taxonomy" id="83541"/>
    <lineage>
        <taxon>Bacteria</taxon>
        <taxon>Bacillati</taxon>
        <taxon>Cyanobacteriota</taxon>
        <taxon>Cyanophyceae</taxon>
        <taxon>Nostocales</taxon>
        <taxon>Hapalosiphonaceae</taxon>
        <taxon>Mastigocladus</taxon>
    </lineage>
</organism>
<reference key="1">
    <citation type="submission" date="1996-02" db="EMBL/GenBank/DDBJ databases">
        <title>Nucleotide sequences of the nifHDK, orf4, and nifH2 genes and of putative regulatory sequences from the thermophilic cyanobacterium Fischerella sp.</title>
        <authorList>
            <person name="Luo X.-Z.J."/>
            <person name="Stevens S.E."/>
        </authorList>
    </citation>
    <scope>NUCLEOTIDE SEQUENCE [GENOMIC DNA]</scope>
    <source>
        <strain>UTEX 1931</strain>
    </source>
</reference>
<gene>
    <name type="primary">nifH2</name>
</gene>